<accession>P25539</accession>
<accession>Q2MC12</accession>
<proteinExistence type="evidence at protein level"/>
<dbReference type="EC" id="3.5.4.26" evidence="4"/>
<dbReference type="EC" id="1.1.1.193" evidence="4"/>
<dbReference type="EMBL" id="X64395">
    <property type="protein sequence ID" value="CAA45735.1"/>
    <property type="molecule type" value="Genomic_DNA"/>
</dbReference>
<dbReference type="EMBL" id="U82664">
    <property type="protein sequence ID" value="AAB40170.1"/>
    <property type="molecule type" value="Genomic_DNA"/>
</dbReference>
<dbReference type="EMBL" id="U00096">
    <property type="protein sequence ID" value="AAC73517.1"/>
    <property type="molecule type" value="Genomic_DNA"/>
</dbReference>
<dbReference type="EMBL" id="AP009048">
    <property type="protein sequence ID" value="BAE76194.1"/>
    <property type="molecule type" value="Genomic_DNA"/>
</dbReference>
<dbReference type="PIR" id="S26201">
    <property type="entry name" value="S26201"/>
</dbReference>
<dbReference type="RefSeq" id="NP_414948.1">
    <property type="nucleotide sequence ID" value="NC_000913.3"/>
</dbReference>
<dbReference type="RefSeq" id="WP_001150457.1">
    <property type="nucleotide sequence ID" value="NZ_SSZK01000009.1"/>
</dbReference>
<dbReference type="PDB" id="2G6V">
    <property type="method" value="X-ray"/>
    <property type="resolution" value="2.60 A"/>
    <property type="chains" value="A/B=2-367"/>
</dbReference>
<dbReference type="PDB" id="2O7P">
    <property type="method" value="X-ray"/>
    <property type="resolution" value="3.00 A"/>
    <property type="chains" value="A/B=2-367"/>
</dbReference>
<dbReference type="PDB" id="2OBC">
    <property type="method" value="X-ray"/>
    <property type="resolution" value="3.00 A"/>
    <property type="chains" value="A/B=2-367"/>
</dbReference>
<dbReference type="PDBsum" id="2G6V"/>
<dbReference type="PDBsum" id="2O7P"/>
<dbReference type="PDBsum" id="2OBC"/>
<dbReference type="SMR" id="P25539"/>
<dbReference type="BioGRID" id="4263249">
    <property type="interactions" value="34"/>
</dbReference>
<dbReference type="BioGRID" id="849992">
    <property type="interactions" value="6"/>
</dbReference>
<dbReference type="DIP" id="DIP-10708N"/>
<dbReference type="FunCoup" id="P25539">
    <property type="interactions" value="712"/>
</dbReference>
<dbReference type="IntAct" id="P25539">
    <property type="interactions" value="34"/>
</dbReference>
<dbReference type="STRING" id="511145.b0414"/>
<dbReference type="MoonProt" id="P25539"/>
<dbReference type="jPOST" id="P25539"/>
<dbReference type="PaxDb" id="511145-b0414"/>
<dbReference type="EnsemblBacteria" id="AAC73517">
    <property type="protein sequence ID" value="AAC73517"/>
    <property type="gene ID" value="b0414"/>
</dbReference>
<dbReference type="GeneID" id="945620"/>
<dbReference type="KEGG" id="ecj:JW0404"/>
<dbReference type="KEGG" id="eco:b0414"/>
<dbReference type="KEGG" id="ecoc:C3026_02020"/>
<dbReference type="PATRIC" id="fig|1411691.4.peg.1863"/>
<dbReference type="EchoBASE" id="EB1297"/>
<dbReference type="eggNOG" id="COG0117">
    <property type="taxonomic scope" value="Bacteria"/>
</dbReference>
<dbReference type="eggNOG" id="COG1985">
    <property type="taxonomic scope" value="Bacteria"/>
</dbReference>
<dbReference type="HOGENOM" id="CLU_036590_1_2_6"/>
<dbReference type="InParanoid" id="P25539"/>
<dbReference type="OMA" id="APHFKFN"/>
<dbReference type="OrthoDB" id="9800865at2"/>
<dbReference type="PhylomeDB" id="P25539"/>
<dbReference type="BioCyc" id="EcoCyc:RIBOFLAVINSYNDEAM-MONOMER"/>
<dbReference type="BioCyc" id="MetaCyc:RIBOFLAVINSYNDEAM-MONOMER"/>
<dbReference type="BRENDA" id="1.1.1.193">
    <property type="organism ID" value="2026"/>
</dbReference>
<dbReference type="BRENDA" id="3.5.4.26">
    <property type="organism ID" value="2026"/>
</dbReference>
<dbReference type="SABIO-RK" id="P25539"/>
<dbReference type="UniPathway" id="UPA00275">
    <property type="reaction ID" value="UER00401"/>
</dbReference>
<dbReference type="UniPathway" id="UPA00275">
    <property type="reaction ID" value="UER00402"/>
</dbReference>
<dbReference type="EvolutionaryTrace" id="P25539"/>
<dbReference type="PRO" id="PR:P25539"/>
<dbReference type="Proteomes" id="UP000000625">
    <property type="component" value="Chromosome"/>
</dbReference>
<dbReference type="GO" id="GO:0008703">
    <property type="term" value="F:5-amino-6-(5-phosphoribosylamino)uracil reductase activity"/>
    <property type="evidence" value="ECO:0000314"/>
    <property type="project" value="EcoCyc"/>
</dbReference>
<dbReference type="GO" id="GO:0008835">
    <property type="term" value="F:diaminohydroxyphosphoribosylaminopyrimidine deaminase activity"/>
    <property type="evidence" value="ECO:0000314"/>
    <property type="project" value="EcoCyc"/>
</dbReference>
<dbReference type="GO" id="GO:0050661">
    <property type="term" value="F:NADP binding"/>
    <property type="evidence" value="ECO:0000314"/>
    <property type="project" value="EcoCyc"/>
</dbReference>
<dbReference type="GO" id="GO:0008270">
    <property type="term" value="F:zinc ion binding"/>
    <property type="evidence" value="ECO:0007669"/>
    <property type="project" value="InterPro"/>
</dbReference>
<dbReference type="GO" id="GO:0009231">
    <property type="term" value="P:riboflavin biosynthetic process"/>
    <property type="evidence" value="ECO:0000314"/>
    <property type="project" value="EcoCyc"/>
</dbReference>
<dbReference type="CDD" id="cd01284">
    <property type="entry name" value="Riboflavin_deaminase-reductase"/>
    <property type="match status" value="1"/>
</dbReference>
<dbReference type="FunFam" id="3.40.140.10:FF:000025">
    <property type="entry name" value="Riboflavin biosynthesis protein RibD"/>
    <property type="match status" value="1"/>
</dbReference>
<dbReference type="FunFam" id="3.40.430.10:FF:000006">
    <property type="entry name" value="Riboflavin biosynthesis protein RibD"/>
    <property type="match status" value="1"/>
</dbReference>
<dbReference type="Gene3D" id="3.40.140.10">
    <property type="entry name" value="Cytidine Deaminase, domain 2"/>
    <property type="match status" value="1"/>
</dbReference>
<dbReference type="Gene3D" id="3.40.430.10">
    <property type="entry name" value="Dihydrofolate Reductase, subunit A"/>
    <property type="match status" value="1"/>
</dbReference>
<dbReference type="InterPro" id="IPR016192">
    <property type="entry name" value="APOBEC/CMP_deaminase_Zn-bd"/>
</dbReference>
<dbReference type="InterPro" id="IPR002125">
    <property type="entry name" value="CMP_dCMP_dom"/>
</dbReference>
<dbReference type="InterPro" id="IPR016193">
    <property type="entry name" value="Cytidine_deaminase-like"/>
</dbReference>
<dbReference type="InterPro" id="IPR024072">
    <property type="entry name" value="DHFR-like_dom_sf"/>
</dbReference>
<dbReference type="InterPro" id="IPR004794">
    <property type="entry name" value="Eubact_RibD"/>
</dbReference>
<dbReference type="InterPro" id="IPR011549">
    <property type="entry name" value="RibD_C"/>
</dbReference>
<dbReference type="InterPro" id="IPR002734">
    <property type="entry name" value="RibDG_C"/>
</dbReference>
<dbReference type="InterPro" id="IPR050765">
    <property type="entry name" value="Riboflavin_Biosynth_HTPR"/>
</dbReference>
<dbReference type="NCBIfam" id="TIGR00326">
    <property type="entry name" value="eubact_ribD"/>
    <property type="match status" value="1"/>
</dbReference>
<dbReference type="NCBIfam" id="NF008052">
    <property type="entry name" value="PRK10786.1"/>
    <property type="match status" value="1"/>
</dbReference>
<dbReference type="NCBIfam" id="TIGR00227">
    <property type="entry name" value="ribD_Cterm"/>
    <property type="match status" value="1"/>
</dbReference>
<dbReference type="PANTHER" id="PTHR38011:SF7">
    <property type="entry name" value="2,5-DIAMINO-6-RIBOSYLAMINO-4(3H)-PYRIMIDINONE 5'-PHOSPHATE REDUCTASE"/>
    <property type="match status" value="1"/>
</dbReference>
<dbReference type="PANTHER" id="PTHR38011">
    <property type="entry name" value="DIHYDROFOLATE REDUCTASE FAMILY PROTEIN (AFU_ORTHOLOGUE AFUA_8G06820)"/>
    <property type="match status" value="1"/>
</dbReference>
<dbReference type="Pfam" id="PF00383">
    <property type="entry name" value="dCMP_cyt_deam_1"/>
    <property type="match status" value="1"/>
</dbReference>
<dbReference type="Pfam" id="PF01872">
    <property type="entry name" value="RibD_C"/>
    <property type="match status" value="1"/>
</dbReference>
<dbReference type="PIRSF" id="PIRSF006769">
    <property type="entry name" value="RibD"/>
    <property type="match status" value="1"/>
</dbReference>
<dbReference type="SUPFAM" id="SSF53927">
    <property type="entry name" value="Cytidine deaminase-like"/>
    <property type="match status" value="1"/>
</dbReference>
<dbReference type="SUPFAM" id="SSF53597">
    <property type="entry name" value="Dihydrofolate reductase-like"/>
    <property type="match status" value="1"/>
</dbReference>
<dbReference type="PROSITE" id="PS00903">
    <property type="entry name" value="CYT_DCMP_DEAMINASES_1"/>
    <property type="match status" value="1"/>
</dbReference>
<dbReference type="PROSITE" id="PS51747">
    <property type="entry name" value="CYT_DCMP_DEAMINASES_2"/>
    <property type="match status" value="1"/>
</dbReference>
<feature type="chain" id="PRO_0000171721" description="Riboflavin biosynthesis protein RibD">
    <location>
        <begin position="1"/>
        <end position="367"/>
    </location>
</feature>
<feature type="domain" description="CMP/dCMP-type deaminase" evidence="2">
    <location>
        <begin position="1"/>
        <end position="123"/>
    </location>
</feature>
<feature type="region of interest" description="Deaminase">
    <location>
        <begin position="1"/>
        <end position="145"/>
    </location>
</feature>
<feature type="region of interest" description="Reductase">
    <location>
        <begin position="146"/>
        <end position="367"/>
    </location>
</feature>
<feature type="active site" description="Proton donor" evidence="1">
    <location>
        <position position="52"/>
    </location>
</feature>
<feature type="binding site" evidence="1">
    <location>
        <position position="50"/>
    </location>
    <ligand>
        <name>Zn(2+)</name>
        <dbReference type="ChEBI" id="CHEBI:29105"/>
        <note>catalytic</note>
    </ligand>
</feature>
<feature type="binding site" evidence="1">
    <location>
        <position position="75"/>
    </location>
    <ligand>
        <name>Zn(2+)</name>
        <dbReference type="ChEBI" id="CHEBI:29105"/>
        <note>catalytic</note>
    </ligand>
</feature>
<feature type="binding site" evidence="1">
    <location>
        <position position="84"/>
    </location>
    <ligand>
        <name>Zn(2+)</name>
        <dbReference type="ChEBI" id="CHEBI:29105"/>
        <note>catalytic</note>
    </ligand>
</feature>
<feature type="binding site">
    <location>
        <begin position="161"/>
        <end position="164"/>
    </location>
    <ligand>
        <name>NADP(+)</name>
        <dbReference type="ChEBI" id="CHEBI:58349"/>
    </ligand>
</feature>
<feature type="binding site">
    <location>
        <position position="168"/>
    </location>
    <ligand>
        <name>substrate</name>
    </ligand>
</feature>
<feature type="binding site">
    <location>
        <position position="170"/>
    </location>
    <ligand>
        <name>NADP(+)</name>
        <dbReference type="ChEBI" id="CHEBI:58349"/>
    </ligand>
</feature>
<feature type="binding site">
    <location>
        <position position="184"/>
    </location>
    <ligand>
        <name>substrate</name>
    </ligand>
</feature>
<feature type="binding site">
    <location>
        <position position="196"/>
    </location>
    <ligand>
        <name>NADP(+)</name>
        <dbReference type="ChEBI" id="CHEBI:58349"/>
    </ligand>
</feature>
<feature type="binding site">
    <location>
        <position position="200"/>
    </location>
    <ligand>
        <name>NADP(+)</name>
        <dbReference type="ChEBI" id="CHEBI:58349"/>
    </ligand>
</feature>
<feature type="binding site">
    <location>
        <position position="204"/>
    </location>
    <ligand>
        <name>substrate</name>
    </ligand>
</feature>
<feature type="binding site">
    <location>
        <position position="207"/>
    </location>
    <ligand>
        <name>substrate</name>
    </ligand>
</feature>
<feature type="binding site">
    <location>
        <position position="234"/>
    </location>
    <ligand>
        <name>NADP(+)</name>
        <dbReference type="ChEBI" id="CHEBI:58349"/>
    </ligand>
</feature>
<feature type="binding site">
    <location>
        <position position="299"/>
    </location>
    <ligand>
        <name>substrate</name>
    </ligand>
</feature>
<feature type="binding site">
    <location>
        <begin position="301"/>
        <end position="304"/>
    </location>
    <ligand>
        <name>NADP(+)</name>
        <dbReference type="ChEBI" id="CHEBI:58349"/>
    </ligand>
</feature>
<feature type="helix" evidence="7">
    <location>
        <begin position="2"/>
        <end position="14"/>
    </location>
</feature>
<feature type="helix" evidence="7">
    <location>
        <begin position="15"/>
        <end position="17"/>
    </location>
</feature>
<feature type="turn" evidence="7">
    <location>
        <begin position="18"/>
        <end position="20"/>
    </location>
</feature>
<feature type="strand" evidence="7">
    <location>
        <begin position="28"/>
        <end position="33"/>
    </location>
</feature>
<feature type="strand" evidence="7">
    <location>
        <begin position="36"/>
        <end position="42"/>
    </location>
</feature>
<feature type="strand" evidence="7">
    <location>
        <begin position="46"/>
        <end position="48"/>
    </location>
</feature>
<feature type="helix" evidence="7">
    <location>
        <begin position="51"/>
        <end position="59"/>
    </location>
</feature>
<feature type="helix" evidence="7">
    <location>
        <begin position="60"/>
        <end position="63"/>
    </location>
</feature>
<feature type="strand" evidence="7">
    <location>
        <begin position="64"/>
        <end position="66"/>
    </location>
</feature>
<feature type="strand" evidence="7">
    <location>
        <begin position="68"/>
        <end position="72"/>
    </location>
</feature>
<feature type="helix" evidence="7">
    <location>
        <begin position="85"/>
        <end position="91"/>
    </location>
</feature>
<feature type="strand" evidence="7">
    <location>
        <begin position="96"/>
        <end position="100"/>
    </location>
</feature>
<feature type="helix" evidence="7">
    <location>
        <begin position="111"/>
        <end position="117"/>
    </location>
</feature>
<feature type="strand" evidence="7">
    <location>
        <begin position="122"/>
        <end position="124"/>
    </location>
</feature>
<feature type="helix" evidence="7">
    <location>
        <begin position="128"/>
        <end position="134"/>
    </location>
</feature>
<feature type="helix" evidence="7">
    <location>
        <begin position="136"/>
        <end position="143"/>
    </location>
</feature>
<feature type="strand" evidence="7">
    <location>
        <begin position="144"/>
        <end position="146"/>
    </location>
</feature>
<feature type="strand" evidence="7">
    <location>
        <begin position="148"/>
        <end position="156"/>
    </location>
</feature>
<feature type="strand" evidence="7">
    <location>
        <begin position="164"/>
        <end position="166"/>
    </location>
</feature>
<feature type="helix" evidence="7">
    <location>
        <begin position="174"/>
        <end position="185"/>
    </location>
</feature>
<feature type="strand" evidence="7">
    <location>
        <begin position="187"/>
        <end position="193"/>
    </location>
</feature>
<feature type="helix" evidence="7">
    <location>
        <begin position="194"/>
        <end position="200"/>
    </location>
</feature>
<feature type="helix" evidence="7">
    <location>
        <begin position="208"/>
        <end position="210"/>
    </location>
</feature>
<feature type="helix" evidence="7">
    <location>
        <begin position="214"/>
        <end position="217"/>
    </location>
</feature>
<feature type="helix" evidence="7">
    <location>
        <begin position="221"/>
        <end position="223"/>
    </location>
</feature>
<feature type="strand" evidence="7">
    <location>
        <begin position="228"/>
        <end position="232"/>
    </location>
</feature>
<feature type="helix" evidence="7">
    <location>
        <begin position="243"/>
        <end position="245"/>
    </location>
</feature>
<feature type="strand" evidence="7">
    <location>
        <begin position="247"/>
        <end position="249"/>
    </location>
</feature>
<feature type="strand" evidence="7">
    <location>
        <begin position="251"/>
        <end position="257"/>
    </location>
</feature>
<feature type="strand" evidence="7">
    <location>
        <begin position="267"/>
        <end position="271"/>
    </location>
</feature>
<feature type="helix" evidence="7">
    <location>
        <begin position="281"/>
        <end position="290"/>
    </location>
</feature>
<feature type="strand" evidence="7">
    <location>
        <begin position="295"/>
        <end position="298"/>
    </location>
</feature>
<feature type="helix" evidence="7">
    <location>
        <begin position="302"/>
        <end position="311"/>
    </location>
</feature>
<feature type="strand" evidence="7">
    <location>
        <begin position="315"/>
        <end position="323"/>
    </location>
</feature>
<feature type="strand" evidence="7">
    <location>
        <begin position="349"/>
        <end position="356"/>
    </location>
</feature>
<feature type="strand" evidence="7">
    <location>
        <begin position="359"/>
        <end position="365"/>
    </location>
</feature>
<gene>
    <name type="primary">ribD</name>
    <name type="synonym">ribG</name>
    <name type="synonym">ybaE</name>
    <name type="ordered locus">b0414</name>
    <name type="ordered locus">JW0404</name>
</gene>
<organism>
    <name type="scientific">Escherichia coli (strain K12)</name>
    <dbReference type="NCBI Taxonomy" id="83333"/>
    <lineage>
        <taxon>Bacteria</taxon>
        <taxon>Pseudomonadati</taxon>
        <taxon>Pseudomonadota</taxon>
        <taxon>Gammaproteobacteria</taxon>
        <taxon>Enterobacterales</taxon>
        <taxon>Enterobacteriaceae</taxon>
        <taxon>Escherichia</taxon>
    </lineage>
</organism>
<sequence>MQDEYYMARALKLAQRGRFTTHPNPNVGCVIVKDGEIVGEGYHQRAGEPHAEVHALRMAGEKAKGATAYVTLEPCSHHGRTPPCCDALIAAGVARVVASMQDPNPQVAGRGLYRLQQAGIDVSHGLMMSEAEQLNKGFLKRMRTGFPYIQLKLGASLDGRTAMASGESQWITSPQARRDVQLLRAQSHAILTSSATVLADDPALTVRWSELDEQTQALYPQQNLRQPIRIVIDSQNRVTPVHRIVQQPGETWFARTQEDSREWPETVRTLLIPEHKGHLDLVVLMMQLGKQQINSIWVEAGPTLAGALLQAGLVDELIVYIAPKLLGSDARGLCTLPGLEKLADAPQFKFKEIRHVGPDVCLHLVGA</sequence>
<keyword id="KW-0002">3D-structure</keyword>
<keyword id="KW-0378">Hydrolase</keyword>
<keyword id="KW-0479">Metal-binding</keyword>
<keyword id="KW-0511">Multifunctional enzyme</keyword>
<keyword id="KW-0521">NADP</keyword>
<keyword id="KW-0560">Oxidoreductase</keyword>
<keyword id="KW-1185">Reference proteome</keyword>
<keyword id="KW-0686">Riboflavin biosynthesis</keyword>
<keyword id="KW-0862">Zinc</keyword>
<name>RIBD_ECOLI</name>
<protein>
    <recommendedName>
        <fullName>Riboflavin biosynthesis protein RibD</fullName>
    </recommendedName>
    <domain>
        <recommendedName>
            <fullName>Diaminohydroxyphosphoribosylaminopyrimidine deaminase</fullName>
            <shortName>DRAP deaminase</shortName>
            <ecNumber evidence="4">3.5.4.26</ecNumber>
        </recommendedName>
        <alternativeName>
            <fullName>Riboflavin-specific deaminase</fullName>
        </alternativeName>
    </domain>
    <domain>
        <recommendedName>
            <fullName>5-amino-6-(5-phosphoribosylamino)uracil reductase</fullName>
            <ecNumber evidence="4">1.1.1.193</ecNumber>
        </recommendedName>
        <alternativeName>
            <fullName>HTP reductase</fullName>
        </alternativeName>
    </domain>
</protein>
<reference key="1">
    <citation type="journal article" date="1992" name="Mol. Gen. Genet.">
        <title>Insertional disruption of the nusB (ssyB) gene leads to cold-sensitive growth of Escherichia coli and suppression of the secY24 mutation.</title>
        <authorList>
            <person name="Taura T."/>
            <person name="Ueguchi C."/>
            <person name="Shiba K."/>
            <person name="Ito K."/>
        </authorList>
    </citation>
    <scope>NUCLEOTIDE SEQUENCE [GENOMIC DNA]</scope>
    <source>
        <strain>K12</strain>
    </source>
</reference>
<reference key="2">
    <citation type="submission" date="1997-01" db="EMBL/GenBank/DDBJ databases">
        <title>Sequence of minutes 4-25 of Escherichia coli.</title>
        <authorList>
            <person name="Chung E."/>
            <person name="Allen E."/>
            <person name="Araujo R."/>
            <person name="Aparicio A.M."/>
            <person name="Davis K."/>
            <person name="Duncan M."/>
            <person name="Federspiel N."/>
            <person name="Hyman R."/>
            <person name="Kalman S."/>
            <person name="Komp C."/>
            <person name="Kurdi O."/>
            <person name="Lew H."/>
            <person name="Lin D."/>
            <person name="Namath A."/>
            <person name="Oefner P."/>
            <person name="Roberts D."/>
            <person name="Schramm S."/>
            <person name="Davis R.W."/>
        </authorList>
    </citation>
    <scope>NUCLEOTIDE SEQUENCE [LARGE SCALE GENOMIC DNA]</scope>
    <source>
        <strain>K12 / MG1655 / ATCC 47076</strain>
    </source>
</reference>
<reference key="3">
    <citation type="journal article" date="1997" name="Science">
        <title>The complete genome sequence of Escherichia coli K-12.</title>
        <authorList>
            <person name="Blattner F.R."/>
            <person name="Plunkett G. III"/>
            <person name="Bloch C.A."/>
            <person name="Perna N.T."/>
            <person name="Burland V."/>
            <person name="Riley M."/>
            <person name="Collado-Vides J."/>
            <person name="Glasner J.D."/>
            <person name="Rode C.K."/>
            <person name="Mayhew G.F."/>
            <person name="Gregor J."/>
            <person name="Davis N.W."/>
            <person name="Kirkpatrick H.A."/>
            <person name="Goeden M.A."/>
            <person name="Rose D.J."/>
            <person name="Mau B."/>
            <person name="Shao Y."/>
        </authorList>
    </citation>
    <scope>NUCLEOTIDE SEQUENCE [LARGE SCALE GENOMIC DNA]</scope>
    <source>
        <strain>K12 / MG1655 / ATCC 47076</strain>
    </source>
</reference>
<reference key="4">
    <citation type="journal article" date="2006" name="Mol. Syst. Biol.">
        <title>Highly accurate genome sequences of Escherichia coli K-12 strains MG1655 and W3110.</title>
        <authorList>
            <person name="Hayashi K."/>
            <person name="Morooka N."/>
            <person name="Yamamoto Y."/>
            <person name="Fujita K."/>
            <person name="Isono K."/>
            <person name="Choi S."/>
            <person name="Ohtsubo E."/>
            <person name="Baba T."/>
            <person name="Wanner B.L."/>
            <person name="Mori H."/>
            <person name="Horiuchi T."/>
        </authorList>
    </citation>
    <scope>NUCLEOTIDE SEQUENCE [LARGE SCALE GENOMIC DNA]</scope>
    <source>
        <strain>K12 / W3110 / ATCC 27325 / DSM 5911</strain>
    </source>
</reference>
<reference key="5">
    <citation type="journal article" date="1997" name="J. Bacteriol.">
        <title>Biosynthesis of riboflavin: characterization of the bifunctional deaminase-reductase of Escherichia coli and Bacillus subtilis.</title>
        <authorList>
            <person name="Richter G."/>
            <person name="Fischer M."/>
            <person name="Krieger C."/>
            <person name="Eberhardt S."/>
            <person name="Luttgen H."/>
            <person name="Gerstenschlager I."/>
            <person name="Bacher A."/>
        </authorList>
    </citation>
    <scope>FUNCTION</scope>
    <scope>CATALYTIC ACTIVITY</scope>
    <scope>PATHWAY</scope>
</reference>
<reference key="6">
    <citation type="journal article" date="2007" name="J. Mol. Biol.">
        <title>The crystal structure of the bifunctional deaminase/reductase RibD of the riboflavin biosynthetic pathway in Escherichia coli: implications for the reductive mechanism.</title>
        <authorList>
            <person name="Stenmark P."/>
            <person name="Moche M."/>
            <person name="Gurmu D."/>
            <person name="Nordlund P."/>
        </authorList>
    </citation>
    <scope>X-RAY CRYSTALLOGRAPHY (2.6 ANGSTROMS) IN COMPLEXES WITH RIBOSE-5-PHOSPHATE AND NADP</scope>
    <scope>SUBUNIT</scope>
</reference>
<evidence type="ECO:0000250" key="1"/>
<evidence type="ECO:0000255" key="2">
    <source>
        <dbReference type="PROSITE-ProRule" id="PRU01083"/>
    </source>
</evidence>
<evidence type="ECO:0000269" key="3">
    <source>
    </source>
</evidence>
<evidence type="ECO:0000269" key="4">
    <source>
    </source>
</evidence>
<evidence type="ECO:0000305" key="5"/>
<evidence type="ECO:0000305" key="6">
    <source>
    </source>
</evidence>
<evidence type="ECO:0007829" key="7">
    <source>
        <dbReference type="PDB" id="2OBC"/>
    </source>
</evidence>
<comment type="function">
    <text evidence="4">Converts 2,5-diamino-6-(ribosylamino)-4(3h)-pyrimidinone 5'-phosphate into 5-amino-6-(ribosylamino)-2,4(1h,3h)-pyrimidinedione 5'-phosphate.</text>
</comment>
<comment type="catalytic activity">
    <reaction evidence="4">
        <text>2,5-diamino-6-hydroxy-4-(5-phosphoribosylamino)-pyrimidine + H2O + H(+) = 5-amino-6-(5-phospho-D-ribosylamino)uracil + NH4(+)</text>
        <dbReference type="Rhea" id="RHEA:21868"/>
        <dbReference type="ChEBI" id="CHEBI:15377"/>
        <dbReference type="ChEBI" id="CHEBI:15378"/>
        <dbReference type="ChEBI" id="CHEBI:28938"/>
        <dbReference type="ChEBI" id="CHEBI:58453"/>
        <dbReference type="ChEBI" id="CHEBI:58614"/>
        <dbReference type="EC" id="3.5.4.26"/>
    </reaction>
    <physiologicalReaction direction="left-to-right" evidence="4">
        <dbReference type="Rhea" id="RHEA:21869"/>
    </physiologicalReaction>
</comment>
<comment type="catalytic activity">
    <reaction evidence="4">
        <text>5-amino-6-(5-phospho-D-ribitylamino)uracil + NADP(+) = 5-amino-6-(5-phospho-D-ribosylamino)uracil + NADPH + H(+)</text>
        <dbReference type="Rhea" id="RHEA:17845"/>
        <dbReference type="ChEBI" id="CHEBI:15378"/>
        <dbReference type="ChEBI" id="CHEBI:57783"/>
        <dbReference type="ChEBI" id="CHEBI:58349"/>
        <dbReference type="ChEBI" id="CHEBI:58421"/>
        <dbReference type="ChEBI" id="CHEBI:58453"/>
        <dbReference type="EC" id="1.1.1.193"/>
    </reaction>
    <physiologicalReaction direction="left-to-right" evidence="4">
        <dbReference type="Rhea" id="RHEA:17846"/>
    </physiologicalReaction>
</comment>
<comment type="cofactor">
    <cofactor evidence="1">
        <name>Zn(2+)</name>
        <dbReference type="ChEBI" id="CHEBI:29105"/>
    </cofactor>
    <text evidence="1">Binds 1 zinc ion.</text>
</comment>
<comment type="pathway">
    <text evidence="6">Cofactor biosynthesis; riboflavin biosynthesis; 5-amino-6-(D-ribitylamino)uracil from GTP: step 2/4.</text>
</comment>
<comment type="pathway">
    <text evidence="6">Cofactor biosynthesis; riboflavin biosynthesis; 5-amino-6-(D-ribitylamino)uracil from GTP: step 3/4.</text>
</comment>
<comment type="subunit">
    <text evidence="3">Homodimer.</text>
</comment>
<comment type="interaction">
    <interactant intactId="EBI-552457">
        <id>P25539</id>
    </interactant>
    <interactant intactId="EBI-542308">
        <id>P24182</id>
        <label>accC</label>
    </interactant>
    <organismsDiffer>false</organismsDiffer>
    <experiments>3</experiments>
</comment>
<comment type="similarity">
    <text evidence="5">In the N-terminal section; belongs to the cytidine and deoxycytidylate deaminase family.</text>
</comment>
<comment type="similarity">
    <text evidence="5">In the C-terminal section; belongs to the HTP reductase family.</text>
</comment>